<dbReference type="EMBL" id="CR936503">
    <property type="protein sequence ID" value="CAI55432.1"/>
    <property type="molecule type" value="Genomic_DNA"/>
</dbReference>
<dbReference type="RefSeq" id="WP_011374830.1">
    <property type="nucleotide sequence ID" value="NC_007576.1"/>
</dbReference>
<dbReference type="SMR" id="Q38WK0"/>
<dbReference type="STRING" id="314315.LCA_1131"/>
<dbReference type="GeneID" id="57133988"/>
<dbReference type="KEGG" id="lsa:LCA_1131"/>
<dbReference type="eggNOG" id="COG0636">
    <property type="taxonomic scope" value="Bacteria"/>
</dbReference>
<dbReference type="HOGENOM" id="CLU_148047_1_1_9"/>
<dbReference type="OrthoDB" id="2357540at2"/>
<dbReference type="Proteomes" id="UP000002707">
    <property type="component" value="Chromosome"/>
</dbReference>
<dbReference type="GO" id="GO:0005886">
    <property type="term" value="C:plasma membrane"/>
    <property type="evidence" value="ECO:0007669"/>
    <property type="project" value="UniProtKB-SubCell"/>
</dbReference>
<dbReference type="GO" id="GO:0045259">
    <property type="term" value="C:proton-transporting ATP synthase complex"/>
    <property type="evidence" value="ECO:0007669"/>
    <property type="project" value="UniProtKB-KW"/>
</dbReference>
<dbReference type="GO" id="GO:0033177">
    <property type="term" value="C:proton-transporting two-sector ATPase complex, proton-transporting domain"/>
    <property type="evidence" value="ECO:0007669"/>
    <property type="project" value="InterPro"/>
</dbReference>
<dbReference type="GO" id="GO:0008289">
    <property type="term" value="F:lipid binding"/>
    <property type="evidence" value="ECO:0007669"/>
    <property type="project" value="UniProtKB-KW"/>
</dbReference>
<dbReference type="GO" id="GO:0046933">
    <property type="term" value="F:proton-transporting ATP synthase activity, rotational mechanism"/>
    <property type="evidence" value="ECO:0007669"/>
    <property type="project" value="UniProtKB-UniRule"/>
</dbReference>
<dbReference type="CDD" id="cd18185">
    <property type="entry name" value="ATP-synt_Fo_c_ATPE"/>
    <property type="match status" value="1"/>
</dbReference>
<dbReference type="FunFam" id="1.20.20.10:FF:000004">
    <property type="entry name" value="ATP synthase subunit c"/>
    <property type="match status" value="1"/>
</dbReference>
<dbReference type="Gene3D" id="1.20.20.10">
    <property type="entry name" value="F1F0 ATP synthase subunit C"/>
    <property type="match status" value="1"/>
</dbReference>
<dbReference type="HAMAP" id="MF_01396">
    <property type="entry name" value="ATP_synth_c_bact"/>
    <property type="match status" value="1"/>
</dbReference>
<dbReference type="InterPro" id="IPR005953">
    <property type="entry name" value="ATP_synth_csu_bac/chlpt"/>
</dbReference>
<dbReference type="InterPro" id="IPR000454">
    <property type="entry name" value="ATP_synth_F0_csu"/>
</dbReference>
<dbReference type="InterPro" id="IPR020537">
    <property type="entry name" value="ATP_synth_F0_csu_DDCD_BS"/>
</dbReference>
<dbReference type="InterPro" id="IPR038662">
    <property type="entry name" value="ATP_synth_F0_csu_sf"/>
</dbReference>
<dbReference type="InterPro" id="IPR002379">
    <property type="entry name" value="ATPase_proteolipid_c-like_dom"/>
</dbReference>
<dbReference type="InterPro" id="IPR035921">
    <property type="entry name" value="F/V-ATP_Csub_sf"/>
</dbReference>
<dbReference type="NCBIfam" id="TIGR01260">
    <property type="entry name" value="ATP_synt_c"/>
    <property type="match status" value="1"/>
</dbReference>
<dbReference type="NCBIfam" id="NF005363">
    <property type="entry name" value="PRK06876.1"/>
    <property type="match status" value="1"/>
</dbReference>
<dbReference type="PANTHER" id="PTHR10031">
    <property type="entry name" value="ATP SYNTHASE LIPID-BINDING PROTEIN, MITOCHONDRIAL"/>
    <property type="match status" value="1"/>
</dbReference>
<dbReference type="PANTHER" id="PTHR10031:SF0">
    <property type="entry name" value="ATPASE PROTEIN 9"/>
    <property type="match status" value="1"/>
</dbReference>
<dbReference type="Pfam" id="PF00137">
    <property type="entry name" value="ATP-synt_C"/>
    <property type="match status" value="1"/>
</dbReference>
<dbReference type="PRINTS" id="PR00124">
    <property type="entry name" value="ATPASEC"/>
</dbReference>
<dbReference type="SUPFAM" id="SSF81333">
    <property type="entry name" value="F1F0 ATP synthase subunit C"/>
    <property type="match status" value="1"/>
</dbReference>
<dbReference type="PROSITE" id="PS00605">
    <property type="entry name" value="ATPASE_C"/>
    <property type="match status" value="1"/>
</dbReference>
<sequence length="70" mass="7289">MNFLAAAIAAGLAAFAASYGNGKVISKTIESMARQPELSAQLRSTMFIGVGLIEAVPILSIVVSFLILFS</sequence>
<proteinExistence type="inferred from homology"/>
<accession>Q38WK0</accession>
<gene>
    <name evidence="1" type="primary">atpE</name>
    <name type="ordered locus">LCA_1131</name>
</gene>
<reference key="1">
    <citation type="journal article" date="2005" name="Nat. Biotechnol.">
        <title>The complete genome sequence of the meat-borne lactic acid bacterium Lactobacillus sakei 23K.</title>
        <authorList>
            <person name="Chaillou S."/>
            <person name="Champomier-Verges M.-C."/>
            <person name="Cornet M."/>
            <person name="Crutz-Le Coq A.-M."/>
            <person name="Dudez A.-M."/>
            <person name="Martin V."/>
            <person name="Beaufils S."/>
            <person name="Darbon-Rongere E."/>
            <person name="Bossy R."/>
            <person name="Loux V."/>
            <person name="Zagorec M."/>
        </authorList>
    </citation>
    <scope>NUCLEOTIDE SEQUENCE [LARGE SCALE GENOMIC DNA]</scope>
    <source>
        <strain>23K</strain>
    </source>
</reference>
<comment type="function">
    <text evidence="1">F(1)F(0) ATP synthase produces ATP from ADP in the presence of a proton or sodium gradient. F-type ATPases consist of two structural domains, F(1) containing the extramembraneous catalytic core and F(0) containing the membrane proton channel, linked together by a central stalk and a peripheral stalk. During catalysis, ATP synthesis in the catalytic domain of F(1) is coupled via a rotary mechanism of the central stalk subunits to proton translocation.</text>
</comment>
<comment type="function">
    <text evidence="1">Key component of the F(0) channel; it plays a direct role in translocation across the membrane. A homomeric c-ring of between 10-14 subunits forms the central stalk rotor element with the F(1) delta and epsilon subunits.</text>
</comment>
<comment type="subunit">
    <text evidence="1">F-type ATPases have 2 components, F(1) - the catalytic core - and F(0) - the membrane proton channel. F(1) has five subunits: alpha(3), beta(3), gamma(1), delta(1), epsilon(1). F(0) has three main subunits: a(1), b(2) and c(10-14). The alpha and beta chains form an alternating ring which encloses part of the gamma chain. F(1) is attached to F(0) by a central stalk formed by the gamma and epsilon chains, while a peripheral stalk is formed by the delta and b chains.</text>
</comment>
<comment type="subcellular location">
    <subcellularLocation>
        <location evidence="1">Cell membrane</location>
        <topology evidence="1">Multi-pass membrane protein</topology>
    </subcellularLocation>
</comment>
<comment type="similarity">
    <text evidence="1">Belongs to the ATPase C chain family.</text>
</comment>
<protein>
    <recommendedName>
        <fullName evidence="1">ATP synthase subunit c</fullName>
    </recommendedName>
    <alternativeName>
        <fullName evidence="1">ATP synthase F(0) sector subunit c</fullName>
    </alternativeName>
    <alternativeName>
        <fullName evidence="1">F-type ATPase subunit c</fullName>
        <shortName evidence="1">F-ATPase subunit c</shortName>
    </alternativeName>
    <alternativeName>
        <fullName evidence="1">Lipid-binding protein</fullName>
    </alternativeName>
</protein>
<evidence type="ECO:0000255" key="1">
    <source>
        <dbReference type="HAMAP-Rule" id="MF_01396"/>
    </source>
</evidence>
<feature type="chain" id="PRO_1000184408" description="ATP synthase subunit c">
    <location>
        <begin position="1"/>
        <end position="70"/>
    </location>
</feature>
<feature type="transmembrane region" description="Helical" evidence="1">
    <location>
        <begin position="1"/>
        <end position="21"/>
    </location>
</feature>
<feature type="transmembrane region" description="Helical" evidence="1">
    <location>
        <begin position="47"/>
        <end position="67"/>
    </location>
</feature>
<feature type="site" description="Reversibly protonated during proton transport" evidence="1">
    <location>
        <position position="54"/>
    </location>
</feature>
<keyword id="KW-0066">ATP synthesis</keyword>
<keyword id="KW-1003">Cell membrane</keyword>
<keyword id="KW-0138">CF(0)</keyword>
<keyword id="KW-0375">Hydrogen ion transport</keyword>
<keyword id="KW-0406">Ion transport</keyword>
<keyword id="KW-0446">Lipid-binding</keyword>
<keyword id="KW-0472">Membrane</keyword>
<keyword id="KW-1185">Reference proteome</keyword>
<keyword id="KW-0812">Transmembrane</keyword>
<keyword id="KW-1133">Transmembrane helix</keyword>
<keyword id="KW-0813">Transport</keyword>
<organism>
    <name type="scientific">Latilactobacillus sakei subsp. sakei (strain 23K)</name>
    <name type="common">Lactobacillus sakei subsp. sakei</name>
    <dbReference type="NCBI Taxonomy" id="314315"/>
    <lineage>
        <taxon>Bacteria</taxon>
        <taxon>Bacillati</taxon>
        <taxon>Bacillota</taxon>
        <taxon>Bacilli</taxon>
        <taxon>Lactobacillales</taxon>
        <taxon>Lactobacillaceae</taxon>
        <taxon>Latilactobacillus</taxon>
    </lineage>
</organism>
<name>ATPL_LATSS</name>